<gene>
    <name evidence="1" type="primary">nagZ</name>
    <name type="ordered locus">SNSL254_A1308</name>
</gene>
<feature type="chain" id="PRO_1000121072" description="Beta-hexosaminidase">
    <location>
        <begin position="1"/>
        <end position="341"/>
    </location>
</feature>
<feature type="region of interest" description="Disordered" evidence="2">
    <location>
        <begin position="170"/>
        <end position="189"/>
    </location>
</feature>
<feature type="compositionally biased region" description="Basic and acidic residues" evidence="2">
    <location>
        <begin position="174"/>
        <end position="189"/>
    </location>
</feature>
<feature type="active site" description="Proton donor/acceptor" evidence="1">
    <location>
        <position position="176"/>
    </location>
</feature>
<feature type="active site" description="Nucleophile" evidence="1">
    <location>
        <position position="248"/>
    </location>
</feature>
<feature type="binding site" evidence="1">
    <location>
        <position position="62"/>
    </location>
    <ligand>
        <name>substrate</name>
    </ligand>
</feature>
<feature type="binding site" evidence="1">
    <location>
        <position position="70"/>
    </location>
    <ligand>
        <name>substrate</name>
    </ligand>
</feature>
<feature type="binding site" evidence="1">
    <location>
        <position position="133"/>
    </location>
    <ligand>
        <name>substrate</name>
    </ligand>
</feature>
<feature type="binding site" evidence="1">
    <location>
        <begin position="163"/>
        <end position="164"/>
    </location>
    <ligand>
        <name>substrate</name>
    </ligand>
</feature>
<feature type="site" description="Important for catalytic activity" evidence="1">
    <location>
        <position position="174"/>
    </location>
</feature>
<organism>
    <name type="scientific">Salmonella newport (strain SL254)</name>
    <dbReference type="NCBI Taxonomy" id="423368"/>
    <lineage>
        <taxon>Bacteria</taxon>
        <taxon>Pseudomonadati</taxon>
        <taxon>Pseudomonadota</taxon>
        <taxon>Gammaproteobacteria</taxon>
        <taxon>Enterobacterales</taxon>
        <taxon>Enterobacteriaceae</taxon>
        <taxon>Salmonella</taxon>
    </lineage>
</organism>
<comment type="function">
    <text evidence="1">Plays a role in peptidoglycan recycling by cleaving the terminal beta-1,4-linked N-acetylglucosamine (GlcNAc) from peptide-linked peptidoglycan fragments, giving rise to free GlcNAc, anhydro-N-acetylmuramic acid and anhydro-N-acetylmuramic acid-linked peptides.</text>
</comment>
<comment type="catalytic activity">
    <reaction evidence="1">
        <text>Hydrolysis of terminal non-reducing N-acetyl-D-hexosamine residues in N-acetyl-beta-D-hexosaminides.</text>
        <dbReference type="EC" id="3.2.1.52"/>
    </reaction>
</comment>
<comment type="pathway">
    <text evidence="1">Cell wall biogenesis; peptidoglycan recycling.</text>
</comment>
<comment type="subcellular location">
    <subcellularLocation>
        <location evidence="1">Cytoplasm</location>
    </subcellularLocation>
</comment>
<comment type="similarity">
    <text evidence="1">Belongs to the glycosyl hydrolase 3 family. NagZ subfamily.</text>
</comment>
<accession>B4T3P6</accession>
<name>NAGZ_SALNS</name>
<dbReference type="EC" id="3.2.1.52" evidence="1"/>
<dbReference type="EMBL" id="CP001113">
    <property type="protein sequence ID" value="ACF63371.1"/>
    <property type="molecule type" value="Genomic_DNA"/>
</dbReference>
<dbReference type="RefSeq" id="WP_000529340.1">
    <property type="nucleotide sequence ID" value="NZ_CCMR01000003.1"/>
</dbReference>
<dbReference type="SMR" id="B4T3P6"/>
<dbReference type="CAZy" id="GH3">
    <property type="family name" value="Glycoside Hydrolase Family 3"/>
</dbReference>
<dbReference type="KEGG" id="see:SNSL254_A1308"/>
<dbReference type="HOGENOM" id="CLU_008392_0_0_6"/>
<dbReference type="UniPathway" id="UPA00544"/>
<dbReference type="Proteomes" id="UP000008824">
    <property type="component" value="Chromosome"/>
</dbReference>
<dbReference type="GO" id="GO:0005737">
    <property type="term" value="C:cytoplasm"/>
    <property type="evidence" value="ECO:0007669"/>
    <property type="project" value="UniProtKB-SubCell"/>
</dbReference>
<dbReference type="GO" id="GO:0004563">
    <property type="term" value="F:beta-N-acetylhexosaminidase activity"/>
    <property type="evidence" value="ECO:0007669"/>
    <property type="project" value="UniProtKB-UniRule"/>
</dbReference>
<dbReference type="GO" id="GO:0005975">
    <property type="term" value="P:carbohydrate metabolic process"/>
    <property type="evidence" value="ECO:0007669"/>
    <property type="project" value="InterPro"/>
</dbReference>
<dbReference type="GO" id="GO:0051301">
    <property type="term" value="P:cell division"/>
    <property type="evidence" value="ECO:0007669"/>
    <property type="project" value="UniProtKB-KW"/>
</dbReference>
<dbReference type="GO" id="GO:0071555">
    <property type="term" value="P:cell wall organization"/>
    <property type="evidence" value="ECO:0007669"/>
    <property type="project" value="UniProtKB-KW"/>
</dbReference>
<dbReference type="GO" id="GO:0009252">
    <property type="term" value="P:peptidoglycan biosynthetic process"/>
    <property type="evidence" value="ECO:0007669"/>
    <property type="project" value="UniProtKB-KW"/>
</dbReference>
<dbReference type="GO" id="GO:0009254">
    <property type="term" value="P:peptidoglycan turnover"/>
    <property type="evidence" value="ECO:0007669"/>
    <property type="project" value="UniProtKB-UniRule"/>
</dbReference>
<dbReference type="GO" id="GO:0008360">
    <property type="term" value="P:regulation of cell shape"/>
    <property type="evidence" value="ECO:0007669"/>
    <property type="project" value="UniProtKB-KW"/>
</dbReference>
<dbReference type="FunFam" id="3.20.20.300:FF:000001">
    <property type="entry name" value="Beta-hexosaminidase"/>
    <property type="match status" value="1"/>
</dbReference>
<dbReference type="Gene3D" id="3.20.20.300">
    <property type="entry name" value="Glycoside hydrolase, family 3, N-terminal domain"/>
    <property type="match status" value="1"/>
</dbReference>
<dbReference type="HAMAP" id="MF_00364">
    <property type="entry name" value="NagZ"/>
    <property type="match status" value="1"/>
</dbReference>
<dbReference type="InterPro" id="IPR022956">
    <property type="entry name" value="Beta_hexosaminidase_bac"/>
</dbReference>
<dbReference type="InterPro" id="IPR019800">
    <property type="entry name" value="Glyco_hydro_3_AS"/>
</dbReference>
<dbReference type="InterPro" id="IPR001764">
    <property type="entry name" value="Glyco_hydro_3_N"/>
</dbReference>
<dbReference type="InterPro" id="IPR036962">
    <property type="entry name" value="Glyco_hydro_3_N_sf"/>
</dbReference>
<dbReference type="InterPro" id="IPR017853">
    <property type="entry name" value="Glycoside_hydrolase_SF"/>
</dbReference>
<dbReference type="InterPro" id="IPR050226">
    <property type="entry name" value="NagZ_Beta-hexosaminidase"/>
</dbReference>
<dbReference type="NCBIfam" id="NF003740">
    <property type="entry name" value="PRK05337.1"/>
    <property type="match status" value="1"/>
</dbReference>
<dbReference type="PANTHER" id="PTHR30480:SF13">
    <property type="entry name" value="BETA-HEXOSAMINIDASE"/>
    <property type="match status" value="1"/>
</dbReference>
<dbReference type="PANTHER" id="PTHR30480">
    <property type="entry name" value="BETA-HEXOSAMINIDASE-RELATED"/>
    <property type="match status" value="1"/>
</dbReference>
<dbReference type="Pfam" id="PF00933">
    <property type="entry name" value="Glyco_hydro_3"/>
    <property type="match status" value="1"/>
</dbReference>
<dbReference type="SUPFAM" id="SSF51445">
    <property type="entry name" value="(Trans)glycosidases"/>
    <property type="match status" value="1"/>
</dbReference>
<dbReference type="PROSITE" id="PS00775">
    <property type="entry name" value="GLYCOSYL_HYDROL_F3"/>
    <property type="match status" value="1"/>
</dbReference>
<protein>
    <recommendedName>
        <fullName evidence="1">Beta-hexosaminidase</fullName>
        <ecNumber evidence="1">3.2.1.52</ecNumber>
    </recommendedName>
    <alternativeName>
        <fullName evidence="1">Beta-N-acetylhexosaminidase</fullName>
    </alternativeName>
    <alternativeName>
        <fullName evidence="1">N-acetyl-beta-glucosaminidase</fullName>
    </alternativeName>
</protein>
<keyword id="KW-0131">Cell cycle</keyword>
<keyword id="KW-0132">Cell division</keyword>
<keyword id="KW-0133">Cell shape</keyword>
<keyword id="KW-0961">Cell wall biogenesis/degradation</keyword>
<keyword id="KW-0963">Cytoplasm</keyword>
<keyword id="KW-0326">Glycosidase</keyword>
<keyword id="KW-0378">Hydrolase</keyword>
<keyword id="KW-0573">Peptidoglycan synthesis</keyword>
<reference key="1">
    <citation type="journal article" date="2011" name="J. Bacteriol.">
        <title>Comparative genomics of 28 Salmonella enterica isolates: evidence for CRISPR-mediated adaptive sublineage evolution.</title>
        <authorList>
            <person name="Fricke W.F."/>
            <person name="Mammel M.K."/>
            <person name="McDermott P.F."/>
            <person name="Tartera C."/>
            <person name="White D.G."/>
            <person name="Leclerc J.E."/>
            <person name="Ravel J."/>
            <person name="Cebula T.A."/>
        </authorList>
    </citation>
    <scope>NUCLEOTIDE SEQUENCE [LARGE SCALE GENOMIC DNA]</scope>
    <source>
        <strain>SL254</strain>
    </source>
</reference>
<evidence type="ECO:0000255" key="1">
    <source>
        <dbReference type="HAMAP-Rule" id="MF_00364"/>
    </source>
</evidence>
<evidence type="ECO:0000256" key="2">
    <source>
        <dbReference type="SAM" id="MobiDB-lite"/>
    </source>
</evidence>
<sequence length="341" mass="37698">MGPVMLNVEGCELDAEEREILAHPLVGGLILFTRNYHDPEQLRELVRQIRAASRNHLVVAVDQEGGRVQRFREGFTRLPAAQSFFALHGLEEGGRLAQEAGWLMASEMIAMDIDISFAPVLDVGHISAAIGERSYHADPAKALAMATRFIDGMHDAGMKTTGKHFPGHGAVTADSHKETPCDPRPETDIRGKDMSVFRTLISENKLDAIMPAHVIYRAIDPRPASGSPYWLKTVLRQELGFDGVIFSDDLSMEGAAIMGSYAERAQASLDAGCDMILVCNNRKGAVSVLDNLSPIKAERVTRLYHKGSFSRRELMDSARWKTASAQLNQLHERWQEEKAGH</sequence>
<proteinExistence type="inferred from homology"/>